<sequence length="352" mass="40765">MGKTDGSSWFTAVKNVFRSPEKLIPRRINRRQDNDLVEEVEDELHQRPKRRKRRWLFKKVSSDPCAINVGINTTSTAINAIAAEETEKTVSPAAKETVFFCRTSVYLKRHVAAILIQTAFRGCLARTAVRALKGVVKLQALVRGHNVRRRTSITLQRVQALVRIQALALDHRKKLTTKLGDEISYSHAFSKQMWRTMEREAHSESELEDKRPSRLNGYGYQETGRRMSTDQAIVEPVKIVEIDKYNNTYSHHQQLNDQTPRGNSFVTRQAHSIPNYMSTTASTVARFRRPQSVPKQRSNRTCLDNNEPRLRLVRKRLSFHNDNPQSYGYIAGDGYFWYDIDKRTNAHEDFQY</sequence>
<feature type="chain" id="PRO_0000453121" description="Protein IQ-DOMAIN 15">
    <location>
        <begin position="1"/>
        <end position="352"/>
    </location>
</feature>
<feature type="domain" description="IQ 1" evidence="2">
    <location>
        <begin position="109"/>
        <end position="137"/>
    </location>
</feature>
<feature type="domain" description="IQ 2" evidence="2">
    <location>
        <begin position="138"/>
        <end position="160"/>
    </location>
</feature>
<feature type="region of interest" description="Calmodulin-binding" evidence="5">
    <location>
        <begin position="140"/>
        <end position="164"/>
    </location>
</feature>
<feature type="region of interest" description="Disordered" evidence="3">
    <location>
        <begin position="200"/>
        <end position="227"/>
    </location>
</feature>
<feature type="compositionally biased region" description="Basic and acidic residues" evidence="3">
    <location>
        <begin position="200"/>
        <end position="212"/>
    </location>
</feature>
<comment type="function">
    <text evidence="1">May be involved in cooperative interactions with calmodulins or calmodulin-like proteins (By similarity). Recruits calmodulin proteins to microtubules, thus being a potential scaffold in cellular signaling and trafficking (By similarity). May associate with nucleic acids and regulate gene expression at the transcriptional or post-transcriptional level (By similarity).</text>
</comment>
<comment type="subunit">
    <text evidence="1">Binds to multiple calmodulin (CaM) in the presence of Ca(2+) and CaM-like proteins.</text>
</comment>
<comment type="subcellular location">
    <subcellularLocation>
        <location evidence="4">Cell membrane</location>
    </subcellularLocation>
    <subcellularLocation>
        <location evidence="4">Nucleus envelope</location>
    </subcellularLocation>
</comment>
<comment type="similarity">
    <text evidence="6">Belongs to the IQD family.</text>
</comment>
<organism>
    <name type="scientific">Arabidopsis thaliana</name>
    <name type="common">Mouse-ear cress</name>
    <dbReference type="NCBI Taxonomy" id="3702"/>
    <lineage>
        <taxon>Eukaryota</taxon>
        <taxon>Viridiplantae</taxon>
        <taxon>Streptophyta</taxon>
        <taxon>Embryophyta</taxon>
        <taxon>Tracheophyta</taxon>
        <taxon>Spermatophyta</taxon>
        <taxon>Magnoliopsida</taxon>
        <taxon>eudicotyledons</taxon>
        <taxon>Gunneridae</taxon>
        <taxon>Pentapetalae</taxon>
        <taxon>rosids</taxon>
        <taxon>malvids</taxon>
        <taxon>Brassicales</taxon>
        <taxon>Brassicaceae</taxon>
        <taxon>Camelineae</taxon>
        <taxon>Arabidopsis</taxon>
    </lineage>
</organism>
<proteinExistence type="evidence at protein level"/>
<reference key="1">
    <citation type="journal article" date="2000" name="Nature">
        <title>Sequence and analysis of chromosome 3 of the plant Arabidopsis thaliana.</title>
        <authorList>
            <person name="Salanoubat M."/>
            <person name="Lemcke K."/>
            <person name="Rieger M."/>
            <person name="Ansorge W."/>
            <person name="Unseld M."/>
            <person name="Fartmann B."/>
            <person name="Valle G."/>
            <person name="Bloecker H."/>
            <person name="Perez-Alonso M."/>
            <person name="Obermaier B."/>
            <person name="Delseny M."/>
            <person name="Boutry M."/>
            <person name="Grivell L.A."/>
            <person name="Mache R."/>
            <person name="Puigdomenech P."/>
            <person name="De Simone V."/>
            <person name="Choisne N."/>
            <person name="Artiguenave F."/>
            <person name="Robert C."/>
            <person name="Brottier P."/>
            <person name="Wincker P."/>
            <person name="Cattolico L."/>
            <person name="Weissenbach J."/>
            <person name="Saurin W."/>
            <person name="Quetier F."/>
            <person name="Schaefer M."/>
            <person name="Mueller-Auer S."/>
            <person name="Gabel C."/>
            <person name="Fuchs M."/>
            <person name="Benes V."/>
            <person name="Wurmbach E."/>
            <person name="Drzonek H."/>
            <person name="Erfle H."/>
            <person name="Jordan N."/>
            <person name="Bangert S."/>
            <person name="Wiedelmann R."/>
            <person name="Kranz H."/>
            <person name="Voss H."/>
            <person name="Holland R."/>
            <person name="Brandt P."/>
            <person name="Nyakatura G."/>
            <person name="Vezzi A."/>
            <person name="D'Angelo M."/>
            <person name="Pallavicini A."/>
            <person name="Toppo S."/>
            <person name="Simionati B."/>
            <person name="Conrad A."/>
            <person name="Hornischer K."/>
            <person name="Kauer G."/>
            <person name="Loehnert T.-H."/>
            <person name="Nordsiek G."/>
            <person name="Reichelt J."/>
            <person name="Scharfe M."/>
            <person name="Schoen O."/>
            <person name="Bargues M."/>
            <person name="Terol J."/>
            <person name="Climent J."/>
            <person name="Navarro P."/>
            <person name="Collado C."/>
            <person name="Perez-Perez A."/>
            <person name="Ottenwaelder B."/>
            <person name="Duchemin D."/>
            <person name="Cooke R."/>
            <person name="Laudie M."/>
            <person name="Berger-Llauro C."/>
            <person name="Purnelle B."/>
            <person name="Masuy D."/>
            <person name="de Haan M."/>
            <person name="Maarse A.C."/>
            <person name="Alcaraz J.-P."/>
            <person name="Cottet A."/>
            <person name="Casacuberta E."/>
            <person name="Monfort A."/>
            <person name="Argiriou A."/>
            <person name="Flores M."/>
            <person name="Liguori R."/>
            <person name="Vitale D."/>
            <person name="Mannhaupt G."/>
            <person name="Haase D."/>
            <person name="Schoof H."/>
            <person name="Rudd S."/>
            <person name="Zaccaria P."/>
            <person name="Mewes H.-W."/>
            <person name="Mayer K.F.X."/>
            <person name="Kaul S."/>
            <person name="Town C.D."/>
            <person name="Koo H.L."/>
            <person name="Tallon L.J."/>
            <person name="Jenkins J."/>
            <person name="Rooney T."/>
            <person name="Rizzo M."/>
            <person name="Walts A."/>
            <person name="Utterback T."/>
            <person name="Fujii C.Y."/>
            <person name="Shea T.P."/>
            <person name="Creasy T.H."/>
            <person name="Haas B."/>
            <person name="Maiti R."/>
            <person name="Wu D."/>
            <person name="Peterson J."/>
            <person name="Van Aken S."/>
            <person name="Pai G."/>
            <person name="Militscher J."/>
            <person name="Sellers P."/>
            <person name="Gill J.E."/>
            <person name="Feldblyum T.V."/>
            <person name="Preuss D."/>
            <person name="Lin X."/>
            <person name="Nierman W.C."/>
            <person name="Salzberg S.L."/>
            <person name="White O."/>
            <person name="Venter J.C."/>
            <person name="Fraser C.M."/>
            <person name="Kaneko T."/>
            <person name="Nakamura Y."/>
            <person name="Sato S."/>
            <person name="Kato T."/>
            <person name="Asamizu E."/>
            <person name="Sasamoto S."/>
            <person name="Kimura T."/>
            <person name="Idesawa K."/>
            <person name="Kawashima K."/>
            <person name="Kishida Y."/>
            <person name="Kiyokawa C."/>
            <person name="Kohara M."/>
            <person name="Matsumoto M."/>
            <person name="Matsuno A."/>
            <person name="Muraki A."/>
            <person name="Nakayama S."/>
            <person name="Nakazaki N."/>
            <person name="Shinpo S."/>
            <person name="Takeuchi C."/>
            <person name="Wada T."/>
            <person name="Watanabe A."/>
            <person name="Yamada M."/>
            <person name="Yasuda M."/>
            <person name="Tabata S."/>
        </authorList>
    </citation>
    <scope>NUCLEOTIDE SEQUENCE [LARGE SCALE GENOMIC DNA]</scope>
    <source>
        <strain>cv. Columbia</strain>
    </source>
</reference>
<reference key="2">
    <citation type="journal article" date="2017" name="Plant J.">
        <title>Araport11: a complete reannotation of the Arabidopsis thaliana reference genome.</title>
        <authorList>
            <person name="Cheng C.Y."/>
            <person name="Krishnakumar V."/>
            <person name="Chan A.P."/>
            <person name="Thibaud-Nissen F."/>
            <person name="Schobel S."/>
            <person name="Town C.D."/>
        </authorList>
    </citation>
    <scope>GENOME REANNOTATION</scope>
    <source>
        <strain>cv. Columbia</strain>
    </source>
</reference>
<reference key="3">
    <citation type="journal article" date="2005" name="BMC Evol. Biol.">
        <title>Genome-wide comparative analysis of the IQD gene families in Arabidopsis thaliana and Oryza sativa.</title>
        <authorList>
            <person name="Abel S."/>
            <person name="Savchenko T."/>
            <person name="Levy M."/>
        </authorList>
    </citation>
    <scope>INTERACTION WITH CALMODULIN</scope>
    <scope>GENE FAMILY</scope>
    <scope>NOMENCLATURE</scope>
    <source>
        <strain>cv. Columbia</strain>
    </source>
</reference>
<reference key="4">
    <citation type="journal article" date="2017" name="Plant Physiol.">
        <title>The IQD family of calmodulin-binding proteins links calcium signaling to microtubules, membrane subdomains, and the nucleus.</title>
        <authorList>
            <person name="Buerstenbinder K."/>
            <person name="Moeller B."/>
            <person name="Ploetner R."/>
            <person name="Stamm G."/>
            <person name="Hause G."/>
            <person name="Mitra D."/>
            <person name="Abel S."/>
        </authorList>
    </citation>
    <scope>SUBCELLULAR LOCATION</scope>
    <source>
        <strain>cv. Columbia</strain>
    </source>
</reference>
<reference key="5">
    <citation type="journal article" date="2017" name="Plant Signal. Behav.">
        <title>Functions of IQD proteins as hubs in cellular calcium and auxin signaling: A toolbox for shape formation and tissue-specification in plants?</title>
        <authorList>
            <person name="Buerstenbinder K."/>
            <person name="Mitra D."/>
            <person name="Quegwer J."/>
        </authorList>
    </citation>
    <scope>REVIEW</scope>
</reference>
<keyword id="KW-0112">Calmodulin-binding</keyword>
<keyword id="KW-1003">Cell membrane</keyword>
<keyword id="KW-0472">Membrane</keyword>
<keyword id="KW-0539">Nucleus</keyword>
<keyword id="KW-1185">Reference proteome</keyword>
<keyword id="KW-0677">Repeat</keyword>
<protein>
    <recommendedName>
        <fullName evidence="5">Protein IQ-DOMAIN 15</fullName>
        <shortName evidence="5">AtIQD15</shortName>
    </recommendedName>
</protein>
<accession>Q9SG11</accession>
<gene>
    <name evidence="5" type="primary">IQD15</name>
    <name evidence="8" type="ordered locus">At3g49380</name>
    <name evidence="9" type="ORF">F2K15.240</name>
    <name evidence="7" type="ORF">T1G12.8</name>
</gene>
<name>IQD15_ARATH</name>
<evidence type="ECO:0000250" key="1">
    <source>
        <dbReference type="UniProtKB" id="Q9SF32"/>
    </source>
</evidence>
<evidence type="ECO:0000255" key="2">
    <source>
        <dbReference type="PROSITE-ProRule" id="PRU00116"/>
    </source>
</evidence>
<evidence type="ECO:0000256" key="3">
    <source>
        <dbReference type="SAM" id="MobiDB-lite"/>
    </source>
</evidence>
<evidence type="ECO:0000269" key="4">
    <source>
    </source>
</evidence>
<evidence type="ECO:0000303" key="5">
    <source>
    </source>
</evidence>
<evidence type="ECO:0000305" key="6"/>
<evidence type="ECO:0000312" key="7">
    <source>
        <dbReference type="EMBL" id="AAG52179.1"/>
    </source>
</evidence>
<evidence type="ECO:0000312" key="8">
    <source>
        <dbReference type="EMBL" id="AEE78534.1"/>
    </source>
</evidence>
<evidence type="ECO:0000312" key="9">
    <source>
        <dbReference type="EMBL" id="CAB66417.1"/>
    </source>
</evidence>
<dbReference type="EMBL" id="AC012329">
    <property type="protein sequence ID" value="AAG52179.1"/>
    <property type="molecule type" value="Genomic_DNA"/>
</dbReference>
<dbReference type="EMBL" id="AL132956">
    <property type="protein sequence ID" value="CAB66417.1"/>
    <property type="molecule type" value="Genomic_DNA"/>
</dbReference>
<dbReference type="EMBL" id="CP002686">
    <property type="protein sequence ID" value="AEE78534.1"/>
    <property type="molecule type" value="Genomic_DNA"/>
</dbReference>
<dbReference type="PIR" id="T45843">
    <property type="entry name" value="T45843"/>
</dbReference>
<dbReference type="RefSeq" id="NP_190507.1">
    <property type="nucleotide sequence ID" value="NM_114798.2"/>
</dbReference>
<dbReference type="SMR" id="Q9SG11"/>
<dbReference type="STRING" id="3702.Q9SG11"/>
<dbReference type="PaxDb" id="3702-AT3G49380.1"/>
<dbReference type="EnsemblPlants" id="AT3G49380.1">
    <property type="protein sequence ID" value="AT3G49380.1"/>
    <property type="gene ID" value="AT3G49380"/>
</dbReference>
<dbReference type="GeneID" id="824100"/>
<dbReference type="Gramene" id="AT3G49380.1">
    <property type="protein sequence ID" value="AT3G49380.1"/>
    <property type="gene ID" value="AT3G49380"/>
</dbReference>
<dbReference type="KEGG" id="ath:AT3G49380"/>
<dbReference type="Araport" id="AT3G49380"/>
<dbReference type="TAIR" id="AT3G49380">
    <property type="gene designation" value="IQD15"/>
</dbReference>
<dbReference type="eggNOG" id="ENOG502QTQ9">
    <property type="taxonomic scope" value="Eukaryota"/>
</dbReference>
<dbReference type="HOGENOM" id="CLU_776945_0_0_1"/>
<dbReference type="InParanoid" id="Q9SG11"/>
<dbReference type="OMA" id="HSIPNYM"/>
<dbReference type="OrthoDB" id="776767at2759"/>
<dbReference type="PhylomeDB" id="Q9SG11"/>
<dbReference type="PRO" id="PR:Q9SG11"/>
<dbReference type="Proteomes" id="UP000006548">
    <property type="component" value="Chromosome 3"/>
</dbReference>
<dbReference type="ExpressionAtlas" id="Q9SG11">
    <property type="expression patterns" value="baseline and differential"/>
</dbReference>
<dbReference type="GO" id="GO:0005635">
    <property type="term" value="C:nuclear envelope"/>
    <property type="evidence" value="ECO:0007669"/>
    <property type="project" value="UniProtKB-SubCell"/>
</dbReference>
<dbReference type="GO" id="GO:0005886">
    <property type="term" value="C:plasma membrane"/>
    <property type="evidence" value="ECO:0007669"/>
    <property type="project" value="UniProtKB-SubCell"/>
</dbReference>
<dbReference type="GO" id="GO:0005516">
    <property type="term" value="F:calmodulin binding"/>
    <property type="evidence" value="ECO:0007669"/>
    <property type="project" value="UniProtKB-KW"/>
</dbReference>
<dbReference type="InterPro" id="IPR025064">
    <property type="entry name" value="DUF4005"/>
</dbReference>
<dbReference type="InterPro" id="IPR000048">
    <property type="entry name" value="IQ_motif_EF-hand-BS"/>
</dbReference>
<dbReference type="InterPro" id="IPR027417">
    <property type="entry name" value="P-loop_NTPase"/>
</dbReference>
<dbReference type="PANTHER" id="PTHR32295">
    <property type="entry name" value="IQ-DOMAIN 5-RELATED"/>
    <property type="match status" value="1"/>
</dbReference>
<dbReference type="PANTHER" id="PTHR32295:SF122">
    <property type="entry name" value="PROTEIN IQ-DOMAIN 15"/>
    <property type="match status" value="1"/>
</dbReference>
<dbReference type="Pfam" id="PF13178">
    <property type="entry name" value="DUF4005"/>
    <property type="match status" value="1"/>
</dbReference>
<dbReference type="Pfam" id="PF00612">
    <property type="entry name" value="IQ"/>
    <property type="match status" value="2"/>
</dbReference>
<dbReference type="SUPFAM" id="SSF52540">
    <property type="entry name" value="P-loop containing nucleoside triphosphate hydrolases"/>
    <property type="match status" value="1"/>
</dbReference>
<dbReference type="PROSITE" id="PS50096">
    <property type="entry name" value="IQ"/>
    <property type="match status" value="2"/>
</dbReference>